<comment type="subunit">
    <text evidence="1">Part of the 50S ribosomal subunit.</text>
</comment>
<comment type="similarity">
    <text evidence="1">Belongs to the universal ribosomal protein uL30 family.</text>
</comment>
<keyword id="KW-0687">Ribonucleoprotein</keyword>
<keyword id="KW-0689">Ribosomal protein</keyword>
<reference key="1">
    <citation type="submission" date="2007-08" db="EMBL/GenBank/DDBJ databases">
        <authorList>
            <consortium name="The Vibrio harveyi Genome Sequencing Project"/>
            <person name="Bassler B."/>
            <person name="Clifton S.W."/>
            <person name="Fulton L."/>
            <person name="Delehaunty K."/>
            <person name="Fronick C."/>
            <person name="Harrison M."/>
            <person name="Markivic C."/>
            <person name="Fulton R."/>
            <person name="Tin-Wollam A.-M."/>
            <person name="Shah N."/>
            <person name="Pepin K."/>
            <person name="Nash W."/>
            <person name="Thiruvilangam P."/>
            <person name="Bhonagiri V."/>
            <person name="Waters C."/>
            <person name="Tu K.C."/>
            <person name="Irgon J."/>
            <person name="Wilson R.K."/>
        </authorList>
    </citation>
    <scope>NUCLEOTIDE SEQUENCE [LARGE SCALE GENOMIC DNA]</scope>
    <source>
        <strain>ATCC BAA-1116 / BB120</strain>
    </source>
</reference>
<sequence>MATIKVTQTKSSIGRLPKHKATLRGLGLRKINHTVELEDTPCVRGMINKVYYMVKVEE</sequence>
<evidence type="ECO:0000255" key="1">
    <source>
        <dbReference type="HAMAP-Rule" id="MF_01371"/>
    </source>
</evidence>
<evidence type="ECO:0000305" key="2"/>
<organism>
    <name type="scientific">Vibrio campbellii (strain ATCC BAA-1116)</name>
    <dbReference type="NCBI Taxonomy" id="2902295"/>
    <lineage>
        <taxon>Bacteria</taxon>
        <taxon>Pseudomonadati</taxon>
        <taxon>Pseudomonadota</taxon>
        <taxon>Gammaproteobacteria</taxon>
        <taxon>Vibrionales</taxon>
        <taxon>Vibrionaceae</taxon>
        <taxon>Vibrio</taxon>
    </lineage>
</organism>
<feature type="chain" id="PRO_1000056129" description="Large ribosomal subunit protein uL30">
    <location>
        <begin position="1"/>
        <end position="58"/>
    </location>
</feature>
<proteinExistence type="inferred from homology"/>
<protein>
    <recommendedName>
        <fullName evidence="1">Large ribosomal subunit protein uL30</fullName>
    </recommendedName>
    <alternativeName>
        <fullName evidence="2">50S ribosomal protein L30</fullName>
    </alternativeName>
</protein>
<gene>
    <name evidence="1" type="primary">rpmD</name>
    <name type="ordered locus">VIBHAR_00748</name>
</gene>
<accession>A7MWH6</accession>
<dbReference type="EMBL" id="CP000789">
    <property type="protein sequence ID" value="ABU69749.1"/>
    <property type="molecule type" value="Genomic_DNA"/>
</dbReference>
<dbReference type="RefSeq" id="WP_000201159.1">
    <property type="nucleotide sequence ID" value="NC_022269.1"/>
</dbReference>
<dbReference type="SMR" id="A7MWH6"/>
<dbReference type="GeneID" id="96872481"/>
<dbReference type="KEGG" id="vha:VIBHAR_00748"/>
<dbReference type="PATRIC" id="fig|338187.25.peg.1866"/>
<dbReference type="Proteomes" id="UP000008152">
    <property type="component" value="Chromosome I"/>
</dbReference>
<dbReference type="GO" id="GO:0022625">
    <property type="term" value="C:cytosolic large ribosomal subunit"/>
    <property type="evidence" value="ECO:0007669"/>
    <property type="project" value="TreeGrafter"/>
</dbReference>
<dbReference type="GO" id="GO:0003735">
    <property type="term" value="F:structural constituent of ribosome"/>
    <property type="evidence" value="ECO:0007669"/>
    <property type="project" value="InterPro"/>
</dbReference>
<dbReference type="GO" id="GO:0006412">
    <property type="term" value="P:translation"/>
    <property type="evidence" value="ECO:0007669"/>
    <property type="project" value="UniProtKB-UniRule"/>
</dbReference>
<dbReference type="CDD" id="cd01658">
    <property type="entry name" value="Ribosomal_L30"/>
    <property type="match status" value="1"/>
</dbReference>
<dbReference type="FunFam" id="3.30.1390.20:FF:000001">
    <property type="entry name" value="50S ribosomal protein L30"/>
    <property type="match status" value="1"/>
</dbReference>
<dbReference type="Gene3D" id="3.30.1390.20">
    <property type="entry name" value="Ribosomal protein L30, ferredoxin-like fold domain"/>
    <property type="match status" value="1"/>
</dbReference>
<dbReference type="HAMAP" id="MF_01371_B">
    <property type="entry name" value="Ribosomal_uL30_B"/>
    <property type="match status" value="1"/>
</dbReference>
<dbReference type="InterPro" id="IPR036919">
    <property type="entry name" value="Ribo_uL30_ferredoxin-like_sf"/>
</dbReference>
<dbReference type="InterPro" id="IPR005996">
    <property type="entry name" value="Ribosomal_uL30_bac-type"/>
</dbReference>
<dbReference type="InterPro" id="IPR018038">
    <property type="entry name" value="Ribosomal_uL30_CS"/>
</dbReference>
<dbReference type="InterPro" id="IPR016082">
    <property type="entry name" value="Ribosomal_uL30_ferredoxin-like"/>
</dbReference>
<dbReference type="NCBIfam" id="TIGR01308">
    <property type="entry name" value="rpmD_bact"/>
    <property type="match status" value="1"/>
</dbReference>
<dbReference type="PANTHER" id="PTHR15892:SF2">
    <property type="entry name" value="LARGE RIBOSOMAL SUBUNIT PROTEIN UL30M"/>
    <property type="match status" value="1"/>
</dbReference>
<dbReference type="PANTHER" id="PTHR15892">
    <property type="entry name" value="MITOCHONDRIAL RIBOSOMAL PROTEIN L30"/>
    <property type="match status" value="1"/>
</dbReference>
<dbReference type="Pfam" id="PF00327">
    <property type="entry name" value="Ribosomal_L30"/>
    <property type="match status" value="1"/>
</dbReference>
<dbReference type="PIRSF" id="PIRSF002211">
    <property type="entry name" value="Ribosomal_L30_bac-type"/>
    <property type="match status" value="1"/>
</dbReference>
<dbReference type="SUPFAM" id="SSF55129">
    <property type="entry name" value="Ribosomal protein L30p/L7e"/>
    <property type="match status" value="1"/>
</dbReference>
<dbReference type="PROSITE" id="PS00634">
    <property type="entry name" value="RIBOSOMAL_L30"/>
    <property type="match status" value="1"/>
</dbReference>
<name>RL30_VIBC1</name>